<sequence>MRILVTNDDGIYSNGIRAAVKALSSLGEVYVVAPLFQRSASGRAMTLHRPIRARLVDVPGAKVAYGIDGTPTDSVIFALARFGDFDLAVSGINLGENLSTEITVSGTASAAIEAATHEVPSIAISLEVDWKKTLGEGEGIDFSVASHFLKRITRAVLEKGLPEGVDMLNVNVPSNATPETEIAITRLARKRYCPTIEERVDPRGHPYYWIVGQKREEFEPGTDAYALKIERKVSVTPINIDMTARVNFEEVRKVLFAQP</sequence>
<proteinExistence type="inferred from homology"/>
<gene>
    <name evidence="1" type="primary">surE</name>
    <name type="ordered locus">TK1137</name>
</gene>
<accession>Q5JE78</accession>
<comment type="function">
    <text evidence="1">Nucleotidase that shows phosphatase activity on nucleoside 5'-monophosphates.</text>
</comment>
<comment type="catalytic activity">
    <reaction evidence="1">
        <text>a ribonucleoside 5'-phosphate + H2O = a ribonucleoside + phosphate</text>
        <dbReference type="Rhea" id="RHEA:12484"/>
        <dbReference type="ChEBI" id="CHEBI:15377"/>
        <dbReference type="ChEBI" id="CHEBI:18254"/>
        <dbReference type="ChEBI" id="CHEBI:43474"/>
        <dbReference type="ChEBI" id="CHEBI:58043"/>
        <dbReference type="EC" id="3.1.3.5"/>
    </reaction>
</comment>
<comment type="cofactor">
    <cofactor evidence="1">
        <name>a divalent metal cation</name>
        <dbReference type="ChEBI" id="CHEBI:60240"/>
    </cofactor>
    <text evidence="1">Binds 1 divalent metal cation per subunit.</text>
</comment>
<comment type="subcellular location">
    <subcellularLocation>
        <location evidence="1">Cytoplasm</location>
    </subcellularLocation>
</comment>
<comment type="similarity">
    <text evidence="1">Belongs to the SurE nucleotidase family.</text>
</comment>
<dbReference type="EC" id="3.1.3.5" evidence="1"/>
<dbReference type="EMBL" id="AP006878">
    <property type="protein sequence ID" value="BAD85326.1"/>
    <property type="molecule type" value="Genomic_DNA"/>
</dbReference>
<dbReference type="RefSeq" id="WP_011250088.1">
    <property type="nucleotide sequence ID" value="NC_006624.1"/>
</dbReference>
<dbReference type="SMR" id="Q5JE78"/>
<dbReference type="FunCoup" id="Q5JE78">
    <property type="interactions" value="24"/>
</dbReference>
<dbReference type="STRING" id="69014.TK1137"/>
<dbReference type="EnsemblBacteria" id="BAD85326">
    <property type="protein sequence ID" value="BAD85326"/>
    <property type="gene ID" value="TK1137"/>
</dbReference>
<dbReference type="GeneID" id="78447651"/>
<dbReference type="KEGG" id="tko:TK1137"/>
<dbReference type="PATRIC" id="fig|69014.16.peg.1113"/>
<dbReference type="eggNOG" id="arCOG02303">
    <property type="taxonomic scope" value="Archaea"/>
</dbReference>
<dbReference type="HOGENOM" id="CLU_045192_1_3_2"/>
<dbReference type="InParanoid" id="Q5JE78"/>
<dbReference type="OrthoDB" id="26873at2157"/>
<dbReference type="PhylomeDB" id="Q5JE78"/>
<dbReference type="Proteomes" id="UP000000536">
    <property type="component" value="Chromosome"/>
</dbReference>
<dbReference type="GO" id="GO:0005737">
    <property type="term" value="C:cytoplasm"/>
    <property type="evidence" value="ECO:0007669"/>
    <property type="project" value="UniProtKB-SubCell"/>
</dbReference>
<dbReference type="GO" id="GO:0008253">
    <property type="term" value="F:5'-nucleotidase activity"/>
    <property type="evidence" value="ECO:0007669"/>
    <property type="project" value="UniProtKB-UniRule"/>
</dbReference>
<dbReference type="GO" id="GO:0046872">
    <property type="term" value="F:metal ion binding"/>
    <property type="evidence" value="ECO:0007669"/>
    <property type="project" value="UniProtKB-UniRule"/>
</dbReference>
<dbReference type="GO" id="GO:0000166">
    <property type="term" value="F:nucleotide binding"/>
    <property type="evidence" value="ECO:0007669"/>
    <property type="project" value="UniProtKB-KW"/>
</dbReference>
<dbReference type="Gene3D" id="3.40.1210.10">
    <property type="entry name" value="Survival protein SurE-like phosphatase/nucleotidase"/>
    <property type="match status" value="1"/>
</dbReference>
<dbReference type="HAMAP" id="MF_00060">
    <property type="entry name" value="SurE"/>
    <property type="match status" value="1"/>
</dbReference>
<dbReference type="InterPro" id="IPR030048">
    <property type="entry name" value="SurE"/>
</dbReference>
<dbReference type="InterPro" id="IPR002828">
    <property type="entry name" value="SurE-like_Pase/nucleotidase"/>
</dbReference>
<dbReference type="InterPro" id="IPR036523">
    <property type="entry name" value="SurE-like_sf"/>
</dbReference>
<dbReference type="NCBIfam" id="NF001491">
    <property type="entry name" value="PRK00346.2-1"/>
    <property type="match status" value="1"/>
</dbReference>
<dbReference type="NCBIfam" id="TIGR00087">
    <property type="entry name" value="surE"/>
    <property type="match status" value="1"/>
</dbReference>
<dbReference type="PANTHER" id="PTHR30457">
    <property type="entry name" value="5'-NUCLEOTIDASE SURE"/>
    <property type="match status" value="1"/>
</dbReference>
<dbReference type="PANTHER" id="PTHR30457:SF0">
    <property type="entry name" value="PHOSPHATASE, PUTATIVE (AFU_ORTHOLOGUE AFUA_4G01070)-RELATED"/>
    <property type="match status" value="1"/>
</dbReference>
<dbReference type="Pfam" id="PF01975">
    <property type="entry name" value="SurE"/>
    <property type="match status" value="1"/>
</dbReference>
<dbReference type="SUPFAM" id="SSF64167">
    <property type="entry name" value="SurE-like"/>
    <property type="match status" value="1"/>
</dbReference>
<evidence type="ECO:0000255" key="1">
    <source>
        <dbReference type="HAMAP-Rule" id="MF_00060"/>
    </source>
</evidence>
<protein>
    <recommendedName>
        <fullName evidence="1">5'-nucleotidase SurE</fullName>
        <ecNumber evidence="1">3.1.3.5</ecNumber>
    </recommendedName>
    <alternativeName>
        <fullName evidence="1">Nucleoside 5'-monophosphate phosphohydrolase</fullName>
    </alternativeName>
</protein>
<keyword id="KW-0963">Cytoplasm</keyword>
<keyword id="KW-0378">Hydrolase</keyword>
<keyword id="KW-0479">Metal-binding</keyword>
<keyword id="KW-0547">Nucleotide-binding</keyword>
<keyword id="KW-1185">Reference proteome</keyword>
<reference key="1">
    <citation type="journal article" date="2005" name="Genome Res.">
        <title>Complete genome sequence of the hyperthermophilic archaeon Thermococcus kodakaraensis KOD1 and comparison with Pyrococcus genomes.</title>
        <authorList>
            <person name="Fukui T."/>
            <person name="Atomi H."/>
            <person name="Kanai T."/>
            <person name="Matsumi R."/>
            <person name="Fujiwara S."/>
            <person name="Imanaka T."/>
        </authorList>
    </citation>
    <scope>NUCLEOTIDE SEQUENCE [LARGE SCALE GENOMIC DNA]</scope>
    <source>
        <strain>ATCC BAA-918 / JCM 12380 / KOD1</strain>
    </source>
</reference>
<name>SURE_THEKO</name>
<feature type="chain" id="PRO_0000111871" description="5'-nucleotidase SurE">
    <location>
        <begin position="1"/>
        <end position="259"/>
    </location>
</feature>
<feature type="binding site" evidence="1">
    <location>
        <position position="8"/>
    </location>
    <ligand>
        <name>a divalent metal cation</name>
        <dbReference type="ChEBI" id="CHEBI:60240"/>
    </ligand>
</feature>
<feature type="binding site" evidence="1">
    <location>
        <position position="9"/>
    </location>
    <ligand>
        <name>a divalent metal cation</name>
        <dbReference type="ChEBI" id="CHEBI:60240"/>
    </ligand>
</feature>
<feature type="binding site" evidence="1">
    <location>
        <position position="39"/>
    </location>
    <ligand>
        <name>a divalent metal cation</name>
        <dbReference type="ChEBI" id="CHEBI:60240"/>
    </ligand>
</feature>
<feature type="binding site" evidence="1">
    <location>
        <position position="93"/>
    </location>
    <ligand>
        <name>a divalent metal cation</name>
        <dbReference type="ChEBI" id="CHEBI:60240"/>
    </ligand>
</feature>
<organism>
    <name type="scientific">Thermococcus kodakarensis (strain ATCC BAA-918 / JCM 12380 / KOD1)</name>
    <name type="common">Pyrococcus kodakaraensis (strain KOD1)</name>
    <dbReference type="NCBI Taxonomy" id="69014"/>
    <lineage>
        <taxon>Archaea</taxon>
        <taxon>Methanobacteriati</taxon>
        <taxon>Methanobacteriota</taxon>
        <taxon>Thermococci</taxon>
        <taxon>Thermococcales</taxon>
        <taxon>Thermococcaceae</taxon>
        <taxon>Thermococcus</taxon>
    </lineage>
</organism>